<sequence length="126" mass="13388">MRQKAGSYLAVFAGGAIGSVLRELLGFQLPGLSFLTATFGINIAACFLLGWLYAIRHRLHPHLLHLGAVGFCGGLSTFSSFVLELDQLTRMDGWSIGLTAMTLEIAAGLAAAILGEALGRGREARR</sequence>
<geneLocation type="plasmid">
    <name>megaplasmid Spo</name>
</geneLocation>
<evidence type="ECO:0000255" key="1">
    <source>
        <dbReference type="HAMAP-Rule" id="MF_00454"/>
    </source>
</evidence>
<protein>
    <recommendedName>
        <fullName evidence="1">Fluoride-specific ion channel FluC</fullName>
    </recommendedName>
</protein>
<keyword id="KW-0997">Cell inner membrane</keyword>
<keyword id="KW-1003">Cell membrane</keyword>
<keyword id="KW-0407">Ion channel</keyword>
<keyword id="KW-0406">Ion transport</keyword>
<keyword id="KW-0472">Membrane</keyword>
<keyword id="KW-0479">Metal-binding</keyword>
<keyword id="KW-0614">Plasmid</keyword>
<keyword id="KW-1185">Reference proteome</keyword>
<keyword id="KW-0915">Sodium</keyword>
<keyword id="KW-0812">Transmembrane</keyword>
<keyword id="KW-1133">Transmembrane helix</keyword>
<keyword id="KW-0813">Transport</keyword>
<gene>
    <name evidence="1" type="primary">fluC</name>
    <name evidence="1" type="synonym">crcB</name>
    <name type="ordered locus">SPOA0041</name>
</gene>
<accession>Q5LLI6</accession>
<organism>
    <name type="scientific">Ruegeria pomeroyi (strain ATCC 700808 / DSM 15171 / DSS-3)</name>
    <name type="common">Silicibacter pomeroyi</name>
    <dbReference type="NCBI Taxonomy" id="246200"/>
    <lineage>
        <taxon>Bacteria</taxon>
        <taxon>Pseudomonadati</taxon>
        <taxon>Pseudomonadota</taxon>
        <taxon>Alphaproteobacteria</taxon>
        <taxon>Rhodobacterales</taxon>
        <taxon>Roseobacteraceae</taxon>
        <taxon>Ruegeria</taxon>
    </lineage>
</organism>
<name>FLUC_RUEPO</name>
<comment type="function">
    <text evidence="1">Fluoride-specific ion channel. Important for reducing fluoride concentration in the cell, thus reducing its toxicity.</text>
</comment>
<comment type="catalytic activity">
    <reaction evidence="1">
        <text>fluoride(in) = fluoride(out)</text>
        <dbReference type="Rhea" id="RHEA:76159"/>
        <dbReference type="ChEBI" id="CHEBI:17051"/>
    </reaction>
    <physiologicalReaction direction="left-to-right" evidence="1">
        <dbReference type="Rhea" id="RHEA:76160"/>
    </physiologicalReaction>
</comment>
<comment type="activity regulation">
    <text evidence="1">Na(+) is not transported, but it plays an essential structural role and its presence is essential for fluoride channel function.</text>
</comment>
<comment type="subcellular location">
    <subcellularLocation>
        <location evidence="1">Cell inner membrane</location>
        <topology evidence="1">Multi-pass membrane protein</topology>
    </subcellularLocation>
</comment>
<comment type="similarity">
    <text evidence="1">Belongs to the fluoride channel Fluc/FEX (TC 1.A.43) family.</text>
</comment>
<feature type="chain" id="PRO_0000110172" description="Fluoride-specific ion channel FluC">
    <location>
        <begin position="1"/>
        <end position="126"/>
    </location>
</feature>
<feature type="transmembrane region" description="Helical" evidence="1">
    <location>
        <begin position="9"/>
        <end position="29"/>
    </location>
</feature>
<feature type="transmembrane region" description="Helical" evidence="1">
    <location>
        <begin position="35"/>
        <end position="55"/>
    </location>
</feature>
<feature type="transmembrane region" description="Helical" evidence="1">
    <location>
        <begin position="63"/>
        <end position="83"/>
    </location>
</feature>
<feature type="transmembrane region" description="Helical" evidence="1">
    <location>
        <begin position="94"/>
        <end position="114"/>
    </location>
</feature>
<feature type="binding site" evidence="1">
    <location>
        <position position="73"/>
    </location>
    <ligand>
        <name>Na(+)</name>
        <dbReference type="ChEBI" id="CHEBI:29101"/>
        <note>structural</note>
    </ligand>
</feature>
<feature type="binding site" evidence="1">
    <location>
        <position position="76"/>
    </location>
    <ligand>
        <name>Na(+)</name>
        <dbReference type="ChEBI" id="CHEBI:29101"/>
        <note>structural</note>
    </ligand>
</feature>
<reference key="1">
    <citation type="journal article" date="2004" name="Nature">
        <title>Genome sequence of Silicibacter pomeroyi reveals adaptations to the marine environment.</title>
        <authorList>
            <person name="Moran M.A."/>
            <person name="Buchan A."/>
            <person name="Gonzalez J.M."/>
            <person name="Heidelberg J.F."/>
            <person name="Whitman W.B."/>
            <person name="Kiene R.P."/>
            <person name="Henriksen J.R."/>
            <person name="King G.M."/>
            <person name="Belas R."/>
            <person name="Fuqua C."/>
            <person name="Brinkac L.M."/>
            <person name="Lewis M."/>
            <person name="Johri S."/>
            <person name="Weaver B."/>
            <person name="Pai G."/>
            <person name="Eisen J.A."/>
            <person name="Rahe E."/>
            <person name="Sheldon W.M."/>
            <person name="Ye W."/>
            <person name="Miller T.R."/>
            <person name="Carlton J."/>
            <person name="Rasko D.A."/>
            <person name="Paulsen I.T."/>
            <person name="Ren Q."/>
            <person name="Daugherty S.C."/>
            <person name="DeBoy R.T."/>
            <person name="Dodson R.J."/>
            <person name="Durkin A.S."/>
            <person name="Madupu R."/>
            <person name="Nelson W.C."/>
            <person name="Sullivan S.A."/>
            <person name="Rosovitz M.J."/>
            <person name="Haft D.H."/>
            <person name="Selengut J."/>
            <person name="Ward N."/>
        </authorList>
    </citation>
    <scope>NUCLEOTIDE SEQUENCE [LARGE SCALE GENOMIC DNA]</scope>
    <source>
        <strain>ATCC 700808 / DSM 15171 / DSS-3</strain>
    </source>
</reference>
<reference key="2">
    <citation type="journal article" date="2014" name="Stand. Genomic Sci.">
        <title>An updated genome annotation for the model marine bacterium Ruegeria pomeroyi DSS-3.</title>
        <authorList>
            <person name="Rivers A.R."/>
            <person name="Smith C.B."/>
            <person name="Moran M.A."/>
        </authorList>
    </citation>
    <scope>GENOME REANNOTATION</scope>
    <source>
        <strain>ATCC 700808 / DSM 15171 / DSS-3</strain>
    </source>
</reference>
<dbReference type="EMBL" id="CP000032">
    <property type="protein sequence ID" value="AAV97181.1"/>
    <property type="molecule type" value="Genomic_DNA"/>
</dbReference>
<dbReference type="RefSeq" id="WP_011241825.1">
    <property type="nucleotide sequence ID" value="NC_006569.1"/>
</dbReference>
<dbReference type="SMR" id="Q5LLI6"/>
<dbReference type="PaxDb" id="246200-SPOA0041"/>
<dbReference type="KEGG" id="sil:SPOA0041"/>
<dbReference type="eggNOG" id="COG0239">
    <property type="taxonomic scope" value="Bacteria"/>
</dbReference>
<dbReference type="HOGENOM" id="CLU_114342_3_3_5"/>
<dbReference type="OrthoDB" id="9806299at2"/>
<dbReference type="Proteomes" id="UP000001023">
    <property type="component" value="Plasmid megaplasmid"/>
</dbReference>
<dbReference type="GO" id="GO:0005886">
    <property type="term" value="C:plasma membrane"/>
    <property type="evidence" value="ECO:0007669"/>
    <property type="project" value="UniProtKB-SubCell"/>
</dbReference>
<dbReference type="GO" id="GO:0062054">
    <property type="term" value="F:fluoride channel activity"/>
    <property type="evidence" value="ECO:0007669"/>
    <property type="project" value="UniProtKB-UniRule"/>
</dbReference>
<dbReference type="GO" id="GO:0046872">
    <property type="term" value="F:metal ion binding"/>
    <property type="evidence" value="ECO:0007669"/>
    <property type="project" value="UniProtKB-KW"/>
</dbReference>
<dbReference type="GO" id="GO:0140114">
    <property type="term" value="P:cellular detoxification of fluoride"/>
    <property type="evidence" value="ECO:0007669"/>
    <property type="project" value="UniProtKB-UniRule"/>
</dbReference>
<dbReference type="HAMAP" id="MF_00454">
    <property type="entry name" value="FluC"/>
    <property type="match status" value="1"/>
</dbReference>
<dbReference type="InterPro" id="IPR003691">
    <property type="entry name" value="FluC"/>
</dbReference>
<dbReference type="PANTHER" id="PTHR28259">
    <property type="entry name" value="FLUORIDE EXPORT PROTEIN 1-RELATED"/>
    <property type="match status" value="1"/>
</dbReference>
<dbReference type="PANTHER" id="PTHR28259:SF1">
    <property type="entry name" value="FLUORIDE EXPORT PROTEIN 1-RELATED"/>
    <property type="match status" value="1"/>
</dbReference>
<dbReference type="Pfam" id="PF02537">
    <property type="entry name" value="CRCB"/>
    <property type="match status" value="1"/>
</dbReference>
<proteinExistence type="inferred from homology"/>